<evidence type="ECO:0000255" key="1">
    <source>
        <dbReference type="HAMAP-Rule" id="MF_01864"/>
    </source>
</evidence>
<evidence type="ECO:0000255" key="2">
    <source>
        <dbReference type="PROSITE-ProRule" id="PRU01266"/>
    </source>
</evidence>
<dbReference type="EC" id="2.8.4.3" evidence="1"/>
<dbReference type="EMBL" id="AM421808">
    <property type="protein sequence ID" value="CAM09663.1"/>
    <property type="molecule type" value="Genomic_DNA"/>
</dbReference>
<dbReference type="RefSeq" id="WP_002234308.1">
    <property type="nucleotide sequence ID" value="NC_008767.1"/>
</dbReference>
<dbReference type="SMR" id="A1KS33"/>
<dbReference type="KEGG" id="nmc:NMC0353"/>
<dbReference type="HOGENOM" id="CLU_018697_2_0_4"/>
<dbReference type="Proteomes" id="UP000002286">
    <property type="component" value="Chromosome"/>
</dbReference>
<dbReference type="GO" id="GO:0005829">
    <property type="term" value="C:cytosol"/>
    <property type="evidence" value="ECO:0007669"/>
    <property type="project" value="TreeGrafter"/>
</dbReference>
<dbReference type="GO" id="GO:0051539">
    <property type="term" value="F:4 iron, 4 sulfur cluster binding"/>
    <property type="evidence" value="ECO:0007669"/>
    <property type="project" value="UniProtKB-UniRule"/>
</dbReference>
<dbReference type="GO" id="GO:0046872">
    <property type="term" value="F:metal ion binding"/>
    <property type="evidence" value="ECO:0007669"/>
    <property type="project" value="UniProtKB-KW"/>
</dbReference>
<dbReference type="GO" id="GO:0035597">
    <property type="term" value="F:N6-isopentenyladenosine methylthiotransferase activity"/>
    <property type="evidence" value="ECO:0007669"/>
    <property type="project" value="TreeGrafter"/>
</dbReference>
<dbReference type="CDD" id="cd01335">
    <property type="entry name" value="Radical_SAM"/>
    <property type="match status" value="1"/>
</dbReference>
<dbReference type="FunFam" id="3.40.50.12160:FF:000001">
    <property type="entry name" value="tRNA-2-methylthio-N(6)-dimethylallyladenosine synthase"/>
    <property type="match status" value="1"/>
</dbReference>
<dbReference type="FunFam" id="3.80.30.20:FF:000001">
    <property type="entry name" value="tRNA-2-methylthio-N(6)-dimethylallyladenosine synthase 2"/>
    <property type="match status" value="1"/>
</dbReference>
<dbReference type="Gene3D" id="3.40.50.12160">
    <property type="entry name" value="Methylthiotransferase, N-terminal domain"/>
    <property type="match status" value="1"/>
</dbReference>
<dbReference type="Gene3D" id="3.80.30.20">
    <property type="entry name" value="tm_1862 like domain"/>
    <property type="match status" value="1"/>
</dbReference>
<dbReference type="HAMAP" id="MF_01864">
    <property type="entry name" value="tRNA_metthiotr_MiaB"/>
    <property type="match status" value="1"/>
</dbReference>
<dbReference type="InterPro" id="IPR006638">
    <property type="entry name" value="Elp3/MiaA/NifB-like_rSAM"/>
</dbReference>
<dbReference type="InterPro" id="IPR005839">
    <property type="entry name" value="Methylthiotransferase"/>
</dbReference>
<dbReference type="InterPro" id="IPR020612">
    <property type="entry name" value="Methylthiotransferase_CS"/>
</dbReference>
<dbReference type="InterPro" id="IPR013848">
    <property type="entry name" value="Methylthiotransferase_N"/>
</dbReference>
<dbReference type="InterPro" id="IPR038135">
    <property type="entry name" value="Methylthiotransferase_N_sf"/>
</dbReference>
<dbReference type="InterPro" id="IPR006463">
    <property type="entry name" value="MiaB_methiolase"/>
</dbReference>
<dbReference type="InterPro" id="IPR007197">
    <property type="entry name" value="rSAM"/>
</dbReference>
<dbReference type="InterPro" id="IPR023404">
    <property type="entry name" value="rSAM_horseshoe"/>
</dbReference>
<dbReference type="InterPro" id="IPR002792">
    <property type="entry name" value="TRAM_dom"/>
</dbReference>
<dbReference type="NCBIfam" id="TIGR01574">
    <property type="entry name" value="miaB-methiolase"/>
    <property type="match status" value="1"/>
</dbReference>
<dbReference type="NCBIfam" id="TIGR00089">
    <property type="entry name" value="MiaB/RimO family radical SAM methylthiotransferase"/>
    <property type="match status" value="1"/>
</dbReference>
<dbReference type="PANTHER" id="PTHR43020">
    <property type="entry name" value="CDK5 REGULATORY SUBUNIT-ASSOCIATED PROTEIN 1"/>
    <property type="match status" value="1"/>
</dbReference>
<dbReference type="PANTHER" id="PTHR43020:SF2">
    <property type="entry name" value="MITOCHONDRIAL TRNA METHYLTHIOTRANSFERASE CDK5RAP1"/>
    <property type="match status" value="1"/>
</dbReference>
<dbReference type="Pfam" id="PF04055">
    <property type="entry name" value="Radical_SAM"/>
    <property type="match status" value="1"/>
</dbReference>
<dbReference type="Pfam" id="PF01938">
    <property type="entry name" value="TRAM"/>
    <property type="match status" value="1"/>
</dbReference>
<dbReference type="Pfam" id="PF00919">
    <property type="entry name" value="UPF0004"/>
    <property type="match status" value="1"/>
</dbReference>
<dbReference type="SFLD" id="SFLDF00273">
    <property type="entry name" value="(dimethylallyl)adenosine_tRNA"/>
    <property type="match status" value="1"/>
</dbReference>
<dbReference type="SFLD" id="SFLDG01082">
    <property type="entry name" value="B12-binding_domain_containing"/>
    <property type="match status" value="1"/>
</dbReference>
<dbReference type="SFLD" id="SFLDS00029">
    <property type="entry name" value="Radical_SAM"/>
    <property type="match status" value="1"/>
</dbReference>
<dbReference type="SMART" id="SM00729">
    <property type="entry name" value="Elp3"/>
    <property type="match status" value="1"/>
</dbReference>
<dbReference type="SUPFAM" id="SSF102114">
    <property type="entry name" value="Radical SAM enzymes"/>
    <property type="match status" value="1"/>
</dbReference>
<dbReference type="PROSITE" id="PS51449">
    <property type="entry name" value="MTTASE_N"/>
    <property type="match status" value="1"/>
</dbReference>
<dbReference type="PROSITE" id="PS01278">
    <property type="entry name" value="MTTASE_RADICAL"/>
    <property type="match status" value="1"/>
</dbReference>
<dbReference type="PROSITE" id="PS51918">
    <property type="entry name" value="RADICAL_SAM"/>
    <property type="match status" value="1"/>
</dbReference>
<dbReference type="PROSITE" id="PS50926">
    <property type="entry name" value="TRAM"/>
    <property type="match status" value="1"/>
</dbReference>
<sequence length="442" mass="49620">MKKVFIRTFGCQMNEYDSDKMLAVLAEEHGGIEQVTQADEADIILFNTCSVREKAQEKVFSDLGRVRPLKEKNPGLIIGVAGCVASQEGENIIKRAPYVDVVFGPQTLHRLPKMIVDKETSGLSQVDISFPEIEKFDHLPPARVEGGAAFVSIMEGCSKYCSFCVVPYTRGEEFSRPLNDVLTEIANLAQQGVKEINLLGQNVNAYRGEMDDGEICDFATLLRIVHEIPGIERMRFTTSHPREFTDSIIECYRDLPKLVSHLHLPIQSGSDRVLSAMKRGYTALEYKSIIRKLRAIRPDLCLSSDFIVGFPGETEREFEQTLKLVKDIAFDLSFVFIYSPRPGTPAANLHDDTPHEEKVRRLEALNEVIEAETARINQTMIGTVQRCLVEGISKKDPDQLQARTANNRVVNFTGTPDMINQMIDLEITEAYTFSLRGKVVEA</sequence>
<organism>
    <name type="scientific">Neisseria meningitidis serogroup C / serotype 2a (strain ATCC 700532 / DSM 15464 / FAM18)</name>
    <dbReference type="NCBI Taxonomy" id="272831"/>
    <lineage>
        <taxon>Bacteria</taxon>
        <taxon>Pseudomonadati</taxon>
        <taxon>Pseudomonadota</taxon>
        <taxon>Betaproteobacteria</taxon>
        <taxon>Neisseriales</taxon>
        <taxon>Neisseriaceae</taxon>
        <taxon>Neisseria</taxon>
    </lineage>
</organism>
<reference key="1">
    <citation type="journal article" date="2007" name="PLoS Genet.">
        <title>Meningococcal genetic variation mechanisms viewed through comparative analysis of serogroup C strain FAM18.</title>
        <authorList>
            <person name="Bentley S.D."/>
            <person name="Vernikos G.S."/>
            <person name="Snyder L.A.S."/>
            <person name="Churcher C."/>
            <person name="Arrowsmith C."/>
            <person name="Chillingworth T."/>
            <person name="Cronin A."/>
            <person name="Davis P.H."/>
            <person name="Holroyd N.E."/>
            <person name="Jagels K."/>
            <person name="Maddison M."/>
            <person name="Moule S."/>
            <person name="Rabbinowitsch E."/>
            <person name="Sharp S."/>
            <person name="Unwin L."/>
            <person name="Whitehead S."/>
            <person name="Quail M.A."/>
            <person name="Achtman M."/>
            <person name="Barrell B.G."/>
            <person name="Saunders N.J."/>
            <person name="Parkhill J."/>
        </authorList>
    </citation>
    <scope>NUCLEOTIDE SEQUENCE [LARGE SCALE GENOMIC DNA]</scope>
    <source>
        <strain>ATCC 700532 / DSM 15464 / FAM18</strain>
    </source>
</reference>
<protein>
    <recommendedName>
        <fullName evidence="1">tRNA-2-methylthio-N(6)-dimethylallyladenosine synthase</fullName>
        <ecNumber evidence="1">2.8.4.3</ecNumber>
    </recommendedName>
    <alternativeName>
        <fullName evidence="1">(Dimethylallyl)adenosine tRNA methylthiotransferase MiaB</fullName>
    </alternativeName>
    <alternativeName>
        <fullName evidence="1">tRNA-i(6)A37 methylthiotransferase</fullName>
    </alternativeName>
</protein>
<comment type="function">
    <text evidence="1">Catalyzes the methylthiolation of N6-(dimethylallyl)adenosine (i(6)A), leading to the formation of 2-methylthio-N6-(dimethylallyl)adenosine (ms(2)i(6)A) at position 37 in tRNAs that read codons beginning with uridine.</text>
</comment>
<comment type="catalytic activity">
    <reaction evidence="1">
        <text>N(6)-dimethylallyladenosine(37) in tRNA + (sulfur carrier)-SH + AH2 + 2 S-adenosyl-L-methionine = 2-methylsulfanyl-N(6)-dimethylallyladenosine(37) in tRNA + (sulfur carrier)-H + 5'-deoxyadenosine + L-methionine + A + S-adenosyl-L-homocysteine + 2 H(+)</text>
        <dbReference type="Rhea" id="RHEA:37067"/>
        <dbReference type="Rhea" id="RHEA-COMP:10375"/>
        <dbReference type="Rhea" id="RHEA-COMP:10376"/>
        <dbReference type="Rhea" id="RHEA-COMP:14737"/>
        <dbReference type="Rhea" id="RHEA-COMP:14739"/>
        <dbReference type="ChEBI" id="CHEBI:13193"/>
        <dbReference type="ChEBI" id="CHEBI:15378"/>
        <dbReference type="ChEBI" id="CHEBI:17319"/>
        <dbReference type="ChEBI" id="CHEBI:17499"/>
        <dbReference type="ChEBI" id="CHEBI:29917"/>
        <dbReference type="ChEBI" id="CHEBI:57844"/>
        <dbReference type="ChEBI" id="CHEBI:57856"/>
        <dbReference type="ChEBI" id="CHEBI:59789"/>
        <dbReference type="ChEBI" id="CHEBI:64428"/>
        <dbReference type="ChEBI" id="CHEBI:74415"/>
        <dbReference type="ChEBI" id="CHEBI:74417"/>
        <dbReference type="EC" id="2.8.4.3"/>
    </reaction>
</comment>
<comment type="cofactor">
    <cofactor evidence="1">
        <name>[4Fe-4S] cluster</name>
        <dbReference type="ChEBI" id="CHEBI:49883"/>
    </cofactor>
    <text evidence="1">Binds 2 [4Fe-4S] clusters. One cluster is coordinated with 3 cysteines and an exchangeable S-adenosyl-L-methionine.</text>
</comment>
<comment type="subunit">
    <text evidence="1">Monomer.</text>
</comment>
<comment type="subcellular location">
    <subcellularLocation>
        <location evidence="1">Cytoplasm</location>
    </subcellularLocation>
</comment>
<comment type="similarity">
    <text evidence="1">Belongs to the methylthiotransferase family. MiaB subfamily.</text>
</comment>
<proteinExistence type="inferred from homology"/>
<accession>A1KS33</accession>
<feature type="chain" id="PRO_0000374405" description="tRNA-2-methylthio-N(6)-dimethylallyladenosine synthase">
    <location>
        <begin position="1"/>
        <end position="442"/>
    </location>
</feature>
<feature type="domain" description="MTTase N-terminal" evidence="1">
    <location>
        <begin position="2"/>
        <end position="120"/>
    </location>
</feature>
<feature type="domain" description="Radical SAM core" evidence="2">
    <location>
        <begin position="143"/>
        <end position="375"/>
    </location>
</feature>
<feature type="domain" description="TRAM" evidence="1">
    <location>
        <begin position="378"/>
        <end position="441"/>
    </location>
</feature>
<feature type="binding site" evidence="1">
    <location>
        <position position="11"/>
    </location>
    <ligand>
        <name>[4Fe-4S] cluster</name>
        <dbReference type="ChEBI" id="CHEBI:49883"/>
        <label>1</label>
    </ligand>
</feature>
<feature type="binding site" evidence="1">
    <location>
        <position position="49"/>
    </location>
    <ligand>
        <name>[4Fe-4S] cluster</name>
        <dbReference type="ChEBI" id="CHEBI:49883"/>
        <label>1</label>
    </ligand>
</feature>
<feature type="binding site" evidence="1">
    <location>
        <position position="83"/>
    </location>
    <ligand>
        <name>[4Fe-4S] cluster</name>
        <dbReference type="ChEBI" id="CHEBI:49883"/>
        <label>1</label>
    </ligand>
</feature>
<feature type="binding site" evidence="1">
    <location>
        <position position="157"/>
    </location>
    <ligand>
        <name>[4Fe-4S] cluster</name>
        <dbReference type="ChEBI" id="CHEBI:49883"/>
        <label>2</label>
        <note>4Fe-4S-S-AdoMet</note>
    </ligand>
</feature>
<feature type="binding site" evidence="1">
    <location>
        <position position="161"/>
    </location>
    <ligand>
        <name>[4Fe-4S] cluster</name>
        <dbReference type="ChEBI" id="CHEBI:49883"/>
        <label>2</label>
        <note>4Fe-4S-S-AdoMet</note>
    </ligand>
</feature>
<feature type="binding site" evidence="1">
    <location>
        <position position="164"/>
    </location>
    <ligand>
        <name>[4Fe-4S] cluster</name>
        <dbReference type="ChEBI" id="CHEBI:49883"/>
        <label>2</label>
        <note>4Fe-4S-S-AdoMet</note>
    </ligand>
</feature>
<keyword id="KW-0004">4Fe-4S</keyword>
<keyword id="KW-0963">Cytoplasm</keyword>
<keyword id="KW-0408">Iron</keyword>
<keyword id="KW-0411">Iron-sulfur</keyword>
<keyword id="KW-0479">Metal-binding</keyword>
<keyword id="KW-0949">S-adenosyl-L-methionine</keyword>
<keyword id="KW-0808">Transferase</keyword>
<keyword id="KW-0819">tRNA processing</keyword>
<name>MIAB_NEIMF</name>
<gene>
    <name evidence="1" type="primary">miaB</name>
    <name type="ordered locus">NMC0353</name>
</gene>